<proteinExistence type="inferred from homology"/>
<evidence type="ECO:0000255" key="1">
    <source>
        <dbReference type="HAMAP-Rule" id="MF_00129"/>
    </source>
</evidence>
<gene>
    <name evidence="1" type="primary">mnmG</name>
    <name evidence="1" type="synonym">gidA</name>
    <name type="ordered locus">Bxeno_A4361</name>
    <name type="ORF">Bxe_A0028</name>
</gene>
<sequence length="652" mass="71429">MLFPTEFDVIVVGGGHAGTEAALASARMGNTTLLLTHNIETLGQMSCNPSIGGIGKGHLVKEVDALGGAMAAATDEGGIQFRILNSSKGPAVRATRAQADRLLYKQAIRHRLENQPNLWLFQQAVDDLMVEGDRVVGAVTQVGIRFRGRAVVLTAGTFLDGKIHVGLNNYTGGRAGDPAAVSLSARLKELKLPQGRLKTGTPPRIDGRTIDFSQLEEQPGDLDPVPVFSFLGRVEQHPRQVPCWVTHTNARTHDIIRGGLDRSPMYTGVIEGVGPRYCPSIEDKIHRFASKESHQIFLEPEGLTTNEFYPNGISTSLPFDVQLELVRSMRGLEHAHILRPGYAIEYDYFDPRGLKASLETKVISGLFFAGQINGTTGYEEAAAQGLLAGINAGLYVQGKEAWCPRRDQAYLGVLVDDLVTRGVSEPYRMFTSRAEYRLSLREDNADMRLTEIGRELGVVDDVRWDAFSRKRDAVSRETERLRTTWVNPKTLSADEATALLGKPIDHEYSLADLLRRPGVSYDGVCALRAGACAAPETLAEDDVLLAQIKEQIEIGIKYQGYIDRQAGEIERNEAHESTRLPEGLDYAEVRGLSFEARQKLTQFRPETIGQASRISGITPAAISLLMVHLKRGLGRRPTKPAESGTDSAPVTQ</sequence>
<protein>
    <recommendedName>
        <fullName evidence="1">tRNA uridine 5-carboxymethylaminomethyl modification enzyme MnmG</fullName>
    </recommendedName>
    <alternativeName>
        <fullName evidence="1">Glucose-inhibited division protein A</fullName>
    </alternativeName>
</protein>
<comment type="function">
    <text evidence="1">NAD-binding protein involved in the addition of a carboxymethylaminomethyl (cmnm) group at the wobble position (U34) of certain tRNAs, forming tRNA-cmnm(5)s(2)U34.</text>
</comment>
<comment type="cofactor">
    <cofactor evidence="1">
        <name>FAD</name>
        <dbReference type="ChEBI" id="CHEBI:57692"/>
    </cofactor>
</comment>
<comment type="subunit">
    <text evidence="1">Homodimer. Heterotetramer of two MnmE and two MnmG subunits.</text>
</comment>
<comment type="subcellular location">
    <subcellularLocation>
        <location evidence="1">Cytoplasm</location>
    </subcellularLocation>
</comment>
<comment type="similarity">
    <text evidence="1">Belongs to the MnmG family.</text>
</comment>
<name>MNMG_PARXL</name>
<feature type="chain" id="PRO_1000016572" description="tRNA uridine 5-carboxymethylaminomethyl modification enzyme MnmG">
    <location>
        <begin position="1"/>
        <end position="652"/>
    </location>
</feature>
<feature type="binding site" evidence="1">
    <location>
        <begin position="13"/>
        <end position="18"/>
    </location>
    <ligand>
        <name>FAD</name>
        <dbReference type="ChEBI" id="CHEBI:57692"/>
    </ligand>
</feature>
<feature type="binding site" evidence="1">
    <location>
        <begin position="274"/>
        <end position="288"/>
    </location>
    <ligand>
        <name>NAD(+)</name>
        <dbReference type="ChEBI" id="CHEBI:57540"/>
    </ligand>
</feature>
<dbReference type="EMBL" id="CP000270">
    <property type="protein sequence ID" value="ABE32899.1"/>
    <property type="molecule type" value="Genomic_DNA"/>
</dbReference>
<dbReference type="RefSeq" id="WP_011490298.1">
    <property type="nucleotide sequence ID" value="NC_007951.1"/>
</dbReference>
<dbReference type="SMR" id="Q13SP0"/>
<dbReference type="STRING" id="266265.Bxe_A0028"/>
<dbReference type="KEGG" id="bxb:DR64_2207"/>
<dbReference type="KEGG" id="bxe:Bxe_A0028"/>
<dbReference type="PATRIC" id="fig|266265.5.peg.4584"/>
<dbReference type="eggNOG" id="COG0445">
    <property type="taxonomic scope" value="Bacteria"/>
</dbReference>
<dbReference type="OrthoDB" id="9815560at2"/>
<dbReference type="Proteomes" id="UP000001817">
    <property type="component" value="Chromosome 1"/>
</dbReference>
<dbReference type="GO" id="GO:0005829">
    <property type="term" value="C:cytosol"/>
    <property type="evidence" value="ECO:0007669"/>
    <property type="project" value="TreeGrafter"/>
</dbReference>
<dbReference type="GO" id="GO:0050660">
    <property type="term" value="F:flavin adenine dinucleotide binding"/>
    <property type="evidence" value="ECO:0007669"/>
    <property type="project" value="UniProtKB-UniRule"/>
</dbReference>
<dbReference type="GO" id="GO:0030488">
    <property type="term" value="P:tRNA methylation"/>
    <property type="evidence" value="ECO:0007669"/>
    <property type="project" value="TreeGrafter"/>
</dbReference>
<dbReference type="GO" id="GO:0002098">
    <property type="term" value="P:tRNA wobble uridine modification"/>
    <property type="evidence" value="ECO:0007669"/>
    <property type="project" value="InterPro"/>
</dbReference>
<dbReference type="FunFam" id="1.10.10.1800:FF:000001">
    <property type="entry name" value="tRNA uridine 5-carboxymethylaminomethyl modification enzyme MnmG"/>
    <property type="match status" value="1"/>
</dbReference>
<dbReference type="FunFam" id="1.10.150.570:FF:000001">
    <property type="entry name" value="tRNA uridine 5-carboxymethylaminomethyl modification enzyme MnmG"/>
    <property type="match status" value="1"/>
</dbReference>
<dbReference type="FunFam" id="3.50.50.60:FF:000002">
    <property type="entry name" value="tRNA uridine 5-carboxymethylaminomethyl modification enzyme MnmG"/>
    <property type="match status" value="1"/>
</dbReference>
<dbReference type="FunFam" id="3.50.50.60:FF:000010">
    <property type="entry name" value="tRNA uridine 5-carboxymethylaminomethyl modification enzyme MnmG"/>
    <property type="match status" value="1"/>
</dbReference>
<dbReference type="Gene3D" id="3.50.50.60">
    <property type="entry name" value="FAD/NAD(P)-binding domain"/>
    <property type="match status" value="2"/>
</dbReference>
<dbReference type="Gene3D" id="1.10.150.570">
    <property type="entry name" value="GidA associated domain, C-terminal subdomain"/>
    <property type="match status" value="1"/>
</dbReference>
<dbReference type="Gene3D" id="1.10.10.1800">
    <property type="entry name" value="tRNA uridine 5-carboxymethylaminomethyl modification enzyme MnmG/GidA"/>
    <property type="match status" value="1"/>
</dbReference>
<dbReference type="HAMAP" id="MF_00129">
    <property type="entry name" value="MnmG_GidA"/>
    <property type="match status" value="1"/>
</dbReference>
<dbReference type="InterPro" id="IPR036188">
    <property type="entry name" value="FAD/NAD-bd_sf"/>
</dbReference>
<dbReference type="InterPro" id="IPR049312">
    <property type="entry name" value="GIDA_C_N"/>
</dbReference>
<dbReference type="InterPro" id="IPR004416">
    <property type="entry name" value="MnmG"/>
</dbReference>
<dbReference type="InterPro" id="IPR002218">
    <property type="entry name" value="MnmG-rel"/>
</dbReference>
<dbReference type="InterPro" id="IPR020595">
    <property type="entry name" value="MnmG-rel_CS"/>
</dbReference>
<dbReference type="InterPro" id="IPR026904">
    <property type="entry name" value="MnmG_C"/>
</dbReference>
<dbReference type="InterPro" id="IPR047001">
    <property type="entry name" value="MnmG_C_subdom"/>
</dbReference>
<dbReference type="InterPro" id="IPR044920">
    <property type="entry name" value="MnmG_C_subdom_sf"/>
</dbReference>
<dbReference type="InterPro" id="IPR040131">
    <property type="entry name" value="MnmG_N"/>
</dbReference>
<dbReference type="NCBIfam" id="TIGR00136">
    <property type="entry name" value="mnmG_gidA"/>
    <property type="match status" value="1"/>
</dbReference>
<dbReference type="PANTHER" id="PTHR11806">
    <property type="entry name" value="GLUCOSE INHIBITED DIVISION PROTEIN A"/>
    <property type="match status" value="1"/>
</dbReference>
<dbReference type="PANTHER" id="PTHR11806:SF0">
    <property type="entry name" value="PROTEIN MTO1 HOMOLOG, MITOCHONDRIAL"/>
    <property type="match status" value="1"/>
</dbReference>
<dbReference type="Pfam" id="PF01134">
    <property type="entry name" value="GIDA"/>
    <property type="match status" value="1"/>
</dbReference>
<dbReference type="Pfam" id="PF21680">
    <property type="entry name" value="GIDA_C_1st"/>
    <property type="match status" value="1"/>
</dbReference>
<dbReference type="Pfam" id="PF13932">
    <property type="entry name" value="SAM_GIDA_C"/>
    <property type="match status" value="1"/>
</dbReference>
<dbReference type="SMART" id="SM01228">
    <property type="entry name" value="GIDA_assoc_3"/>
    <property type="match status" value="1"/>
</dbReference>
<dbReference type="SUPFAM" id="SSF51905">
    <property type="entry name" value="FAD/NAD(P)-binding domain"/>
    <property type="match status" value="1"/>
</dbReference>
<dbReference type="PROSITE" id="PS01280">
    <property type="entry name" value="GIDA_1"/>
    <property type="match status" value="1"/>
</dbReference>
<dbReference type="PROSITE" id="PS01281">
    <property type="entry name" value="GIDA_2"/>
    <property type="match status" value="1"/>
</dbReference>
<keyword id="KW-0963">Cytoplasm</keyword>
<keyword id="KW-0274">FAD</keyword>
<keyword id="KW-0285">Flavoprotein</keyword>
<keyword id="KW-0520">NAD</keyword>
<keyword id="KW-1185">Reference proteome</keyword>
<keyword id="KW-0819">tRNA processing</keyword>
<reference key="1">
    <citation type="journal article" date="2006" name="Proc. Natl. Acad. Sci. U.S.A.">
        <title>Burkholderia xenovorans LB400 harbors a multi-replicon, 9.73-Mbp genome shaped for versatility.</title>
        <authorList>
            <person name="Chain P.S.G."/>
            <person name="Denef V.J."/>
            <person name="Konstantinidis K.T."/>
            <person name="Vergez L.M."/>
            <person name="Agullo L."/>
            <person name="Reyes V.L."/>
            <person name="Hauser L."/>
            <person name="Cordova M."/>
            <person name="Gomez L."/>
            <person name="Gonzalez M."/>
            <person name="Land M."/>
            <person name="Lao V."/>
            <person name="Larimer F."/>
            <person name="LiPuma J.J."/>
            <person name="Mahenthiralingam E."/>
            <person name="Malfatti S.A."/>
            <person name="Marx C.J."/>
            <person name="Parnell J.J."/>
            <person name="Ramette A."/>
            <person name="Richardson P."/>
            <person name="Seeger M."/>
            <person name="Smith D."/>
            <person name="Spilker T."/>
            <person name="Sul W.J."/>
            <person name="Tsoi T.V."/>
            <person name="Ulrich L.E."/>
            <person name="Zhulin I.B."/>
            <person name="Tiedje J.M."/>
        </authorList>
    </citation>
    <scope>NUCLEOTIDE SEQUENCE [LARGE SCALE GENOMIC DNA]</scope>
    <source>
        <strain>LB400</strain>
    </source>
</reference>
<accession>Q13SP0</accession>
<organism>
    <name type="scientific">Paraburkholderia xenovorans (strain LB400)</name>
    <dbReference type="NCBI Taxonomy" id="266265"/>
    <lineage>
        <taxon>Bacteria</taxon>
        <taxon>Pseudomonadati</taxon>
        <taxon>Pseudomonadota</taxon>
        <taxon>Betaproteobacteria</taxon>
        <taxon>Burkholderiales</taxon>
        <taxon>Burkholderiaceae</taxon>
        <taxon>Paraburkholderia</taxon>
    </lineage>
</organism>